<dbReference type="EC" id="6.1.1.20" evidence="1"/>
<dbReference type="EMBL" id="AE017308">
    <property type="protein sequence ID" value="AAT28002.1"/>
    <property type="molecule type" value="Genomic_DNA"/>
</dbReference>
<dbReference type="RefSeq" id="WP_011265036.1">
    <property type="nucleotide sequence ID" value="NC_006908.1"/>
</dbReference>
<dbReference type="SMR" id="Q6KHC8"/>
<dbReference type="STRING" id="267748.MMOB5160"/>
<dbReference type="KEGG" id="mmo:MMOB5160"/>
<dbReference type="eggNOG" id="COG0072">
    <property type="taxonomic scope" value="Bacteria"/>
</dbReference>
<dbReference type="eggNOG" id="COG0073">
    <property type="taxonomic scope" value="Bacteria"/>
</dbReference>
<dbReference type="HOGENOM" id="CLU_016891_2_0_14"/>
<dbReference type="OrthoDB" id="9805455at2"/>
<dbReference type="Proteomes" id="UP000009072">
    <property type="component" value="Chromosome"/>
</dbReference>
<dbReference type="GO" id="GO:0009328">
    <property type="term" value="C:phenylalanine-tRNA ligase complex"/>
    <property type="evidence" value="ECO:0007669"/>
    <property type="project" value="TreeGrafter"/>
</dbReference>
<dbReference type="GO" id="GO:0005524">
    <property type="term" value="F:ATP binding"/>
    <property type="evidence" value="ECO:0007669"/>
    <property type="project" value="UniProtKB-UniRule"/>
</dbReference>
<dbReference type="GO" id="GO:0000287">
    <property type="term" value="F:magnesium ion binding"/>
    <property type="evidence" value="ECO:0007669"/>
    <property type="project" value="UniProtKB-UniRule"/>
</dbReference>
<dbReference type="GO" id="GO:0004826">
    <property type="term" value="F:phenylalanine-tRNA ligase activity"/>
    <property type="evidence" value="ECO:0007669"/>
    <property type="project" value="UniProtKB-UniRule"/>
</dbReference>
<dbReference type="GO" id="GO:0000049">
    <property type="term" value="F:tRNA binding"/>
    <property type="evidence" value="ECO:0007669"/>
    <property type="project" value="UniProtKB-KW"/>
</dbReference>
<dbReference type="GO" id="GO:0006432">
    <property type="term" value="P:phenylalanyl-tRNA aminoacylation"/>
    <property type="evidence" value="ECO:0007669"/>
    <property type="project" value="UniProtKB-UniRule"/>
</dbReference>
<dbReference type="CDD" id="cd02796">
    <property type="entry name" value="tRNA_bind_bactPheRS"/>
    <property type="match status" value="1"/>
</dbReference>
<dbReference type="Gene3D" id="3.30.56.10">
    <property type="match status" value="2"/>
</dbReference>
<dbReference type="Gene3D" id="3.30.930.10">
    <property type="entry name" value="Bira Bifunctional Protein, Domain 2"/>
    <property type="match status" value="1"/>
</dbReference>
<dbReference type="Gene3D" id="2.40.50.140">
    <property type="entry name" value="Nucleic acid-binding proteins"/>
    <property type="match status" value="1"/>
</dbReference>
<dbReference type="Gene3D" id="3.50.40.10">
    <property type="entry name" value="Phenylalanyl-trna Synthetase, Chain B, domain 3"/>
    <property type="match status" value="1"/>
</dbReference>
<dbReference type="HAMAP" id="MF_00283">
    <property type="entry name" value="Phe_tRNA_synth_beta1"/>
    <property type="match status" value="1"/>
</dbReference>
<dbReference type="InterPro" id="IPR045864">
    <property type="entry name" value="aa-tRNA-synth_II/BPL/LPL"/>
</dbReference>
<dbReference type="InterPro" id="IPR005146">
    <property type="entry name" value="B3/B4_tRNA-bd"/>
</dbReference>
<dbReference type="InterPro" id="IPR009061">
    <property type="entry name" value="DNA-bd_dom_put_sf"/>
</dbReference>
<dbReference type="InterPro" id="IPR012340">
    <property type="entry name" value="NA-bd_OB-fold"/>
</dbReference>
<dbReference type="InterPro" id="IPR045060">
    <property type="entry name" value="Phe-tRNA-ligase_IIc_bsu"/>
</dbReference>
<dbReference type="InterPro" id="IPR004532">
    <property type="entry name" value="Phe-tRNA-ligase_IIc_bsu_bact"/>
</dbReference>
<dbReference type="InterPro" id="IPR020825">
    <property type="entry name" value="Phe-tRNA_synthase-like_B3/B4"/>
</dbReference>
<dbReference type="InterPro" id="IPR041616">
    <property type="entry name" value="PheRS_beta_core"/>
</dbReference>
<dbReference type="InterPro" id="IPR002547">
    <property type="entry name" value="tRNA-bd_dom"/>
</dbReference>
<dbReference type="InterPro" id="IPR033714">
    <property type="entry name" value="tRNA_bind_bactPheRS"/>
</dbReference>
<dbReference type="InterPro" id="IPR005147">
    <property type="entry name" value="tRNA_synthase_B5-dom"/>
</dbReference>
<dbReference type="NCBIfam" id="NF001882">
    <property type="entry name" value="PRK00629.5-4"/>
    <property type="match status" value="1"/>
</dbReference>
<dbReference type="PANTHER" id="PTHR10947:SF0">
    <property type="entry name" value="PHENYLALANINE--TRNA LIGASE BETA SUBUNIT"/>
    <property type="match status" value="1"/>
</dbReference>
<dbReference type="PANTHER" id="PTHR10947">
    <property type="entry name" value="PHENYLALANYL-TRNA SYNTHETASE BETA CHAIN AND LEUCINE-RICH REPEAT-CONTAINING PROTEIN 47"/>
    <property type="match status" value="1"/>
</dbReference>
<dbReference type="Pfam" id="PF03483">
    <property type="entry name" value="B3_4"/>
    <property type="match status" value="1"/>
</dbReference>
<dbReference type="Pfam" id="PF03484">
    <property type="entry name" value="B5"/>
    <property type="match status" value="1"/>
</dbReference>
<dbReference type="Pfam" id="PF01588">
    <property type="entry name" value="tRNA_bind"/>
    <property type="match status" value="1"/>
</dbReference>
<dbReference type="Pfam" id="PF17759">
    <property type="entry name" value="tRNA_synthFbeta"/>
    <property type="match status" value="1"/>
</dbReference>
<dbReference type="SMART" id="SM00873">
    <property type="entry name" value="B3_4"/>
    <property type="match status" value="1"/>
</dbReference>
<dbReference type="SMART" id="SM00874">
    <property type="entry name" value="B5"/>
    <property type="match status" value="1"/>
</dbReference>
<dbReference type="SUPFAM" id="SSF55681">
    <property type="entry name" value="Class II aaRS and biotin synthetases"/>
    <property type="match status" value="1"/>
</dbReference>
<dbReference type="SUPFAM" id="SSF50249">
    <property type="entry name" value="Nucleic acid-binding proteins"/>
    <property type="match status" value="1"/>
</dbReference>
<dbReference type="SUPFAM" id="SSF56037">
    <property type="entry name" value="PheT/TilS domain"/>
    <property type="match status" value="1"/>
</dbReference>
<dbReference type="SUPFAM" id="SSF46955">
    <property type="entry name" value="Putative DNA-binding domain"/>
    <property type="match status" value="1"/>
</dbReference>
<dbReference type="PROSITE" id="PS51483">
    <property type="entry name" value="B5"/>
    <property type="match status" value="1"/>
</dbReference>
<dbReference type="PROSITE" id="PS50886">
    <property type="entry name" value="TRBD"/>
    <property type="match status" value="1"/>
</dbReference>
<protein>
    <recommendedName>
        <fullName evidence="1">Phenylalanine--tRNA ligase beta subunit</fullName>
        <ecNumber evidence="1">6.1.1.20</ecNumber>
    </recommendedName>
    <alternativeName>
        <fullName evidence="1">Phenylalanyl-tRNA synthetase beta subunit</fullName>
        <shortName evidence="1">PheRS</shortName>
    </alternativeName>
</protein>
<evidence type="ECO:0000255" key="1">
    <source>
        <dbReference type="HAMAP-Rule" id="MF_00283"/>
    </source>
</evidence>
<gene>
    <name evidence="1" type="primary">pheT</name>
    <name type="ordered locus">MMOB5160</name>
</gene>
<keyword id="KW-0030">Aminoacyl-tRNA synthetase</keyword>
<keyword id="KW-0067">ATP-binding</keyword>
<keyword id="KW-0963">Cytoplasm</keyword>
<keyword id="KW-0436">Ligase</keyword>
<keyword id="KW-0460">Magnesium</keyword>
<keyword id="KW-0479">Metal-binding</keyword>
<keyword id="KW-0547">Nucleotide-binding</keyword>
<keyword id="KW-0648">Protein biosynthesis</keyword>
<keyword id="KW-1185">Reference proteome</keyword>
<keyword id="KW-0694">RNA-binding</keyword>
<keyword id="KW-0820">tRNA-binding</keyword>
<sequence>MIFSYKHLKKLANLNEISFEDVIKAFNLIGFEVEETKEIRHVENIKYGKVLKIYKNENSDNLTVCEIQFKDKIRIIQTTAKNVEINKYVMAFIPGSKLANNLIESKLLKGIISEGMLVGFDEMLGFEIKLVPKELSKNVIVLDEANLNEDPIANLELHDYLIDLAILPNRSDAISYLVMAKELAAFFGTKIDNDLICLKNLRVSKINSNLEGIFVKSKTLELKLYDKYLLLKSHLKLTNTYKDLENLILIHTGMPIHFLNLKSLEKVNIVSKSSSLEIANRTLKIDNNLVIEKSREIIAIPYLETQKEFEIKDSQKEFFIFMNILSPKEVRKTIKTLKLESSQIKQATKTISHGMQLNAIQYMQSLFEEIEIVNINLNLKPKEILFDHTFINRIAGFEIVKEQKFINAKKSLEILGFKFFEDKILVPAYRHDYTGPYDVIEELFRFYGYDNFPILQPEIKPFKIQKKYDFKFSLASKNYNEIKTYSLVAKEDNNFDPFNFKTEILMKTFPSEKRRIIRNSQAFSLLEIAEYNIKRKLEKINFFDFGMINEGKRALIFASNEKSFNEIKKDLFSLFSYKFELRKTKNNYLHPNASAHIFYENKLIGWMGKINPSLKISDLIFVEILLDEFNISKNQFKEYNFDPLKFRDITFSIEKNQSIDTYLKELKKIKNIFEVQIIDKFEKNEKLNITVRILLEDDAIKNLDEAILKNSWN</sequence>
<name>SYFB_MYCM1</name>
<reference key="1">
    <citation type="journal article" date="2004" name="Genome Res.">
        <title>The complete genome and proteome of Mycoplasma mobile.</title>
        <authorList>
            <person name="Jaffe J.D."/>
            <person name="Stange-Thomann N."/>
            <person name="Smith C."/>
            <person name="DeCaprio D."/>
            <person name="Fisher S."/>
            <person name="Butler J."/>
            <person name="Calvo S."/>
            <person name="Elkins T."/>
            <person name="FitzGerald M.G."/>
            <person name="Hafez N."/>
            <person name="Kodira C.D."/>
            <person name="Major J."/>
            <person name="Wang S."/>
            <person name="Wilkinson J."/>
            <person name="Nicol R."/>
            <person name="Nusbaum C."/>
            <person name="Birren B."/>
            <person name="Berg H.C."/>
            <person name="Church G.M."/>
        </authorList>
    </citation>
    <scope>NUCLEOTIDE SEQUENCE [LARGE SCALE GENOMIC DNA]</scope>
    <source>
        <strain>ATCC 43663 / NCTC 11711 / 163 K</strain>
    </source>
</reference>
<feature type="chain" id="PRO_0000232810" description="Phenylalanine--tRNA ligase beta subunit">
    <location>
        <begin position="1"/>
        <end position="713"/>
    </location>
</feature>
<feature type="domain" description="tRNA-binding" evidence="1">
    <location>
        <begin position="39"/>
        <end position="153"/>
    </location>
</feature>
<feature type="domain" description="B5" evidence="1">
    <location>
        <begin position="379"/>
        <end position="454"/>
    </location>
</feature>
<feature type="binding site" evidence="1">
    <location>
        <position position="432"/>
    </location>
    <ligand>
        <name>Mg(2+)</name>
        <dbReference type="ChEBI" id="CHEBI:18420"/>
        <note>shared with alpha subunit</note>
    </ligand>
</feature>
<feature type="binding site" evidence="1">
    <location>
        <position position="438"/>
    </location>
    <ligand>
        <name>Mg(2+)</name>
        <dbReference type="ChEBI" id="CHEBI:18420"/>
        <note>shared with alpha subunit</note>
    </ligand>
</feature>
<feature type="binding site" evidence="1">
    <location>
        <position position="441"/>
    </location>
    <ligand>
        <name>Mg(2+)</name>
        <dbReference type="ChEBI" id="CHEBI:18420"/>
        <note>shared with alpha subunit</note>
    </ligand>
</feature>
<feature type="binding site" evidence="1">
    <location>
        <position position="442"/>
    </location>
    <ligand>
        <name>Mg(2+)</name>
        <dbReference type="ChEBI" id="CHEBI:18420"/>
        <note>shared with alpha subunit</note>
    </ligand>
</feature>
<comment type="catalytic activity">
    <reaction evidence="1">
        <text>tRNA(Phe) + L-phenylalanine + ATP = L-phenylalanyl-tRNA(Phe) + AMP + diphosphate + H(+)</text>
        <dbReference type="Rhea" id="RHEA:19413"/>
        <dbReference type="Rhea" id="RHEA-COMP:9668"/>
        <dbReference type="Rhea" id="RHEA-COMP:9699"/>
        <dbReference type="ChEBI" id="CHEBI:15378"/>
        <dbReference type="ChEBI" id="CHEBI:30616"/>
        <dbReference type="ChEBI" id="CHEBI:33019"/>
        <dbReference type="ChEBI" id="CHEBI:58095"/>
        <dbReference type="ChEBI" id="CHEBI:78442"/>
        <dbReference type="ChEBI" id="CHEBI:78531"/>
        <dbReference type="ChEBI" id="CHEBI:456215"/>
        <dbReference type="EC" id="6.1.1.20"/>
    </reaction>
</comment>
<comment type="cofactor">
    <cofactor evidence="1">
        <name>Mg(2+)</name>
        <dbReference type="ChEBI" id="CHEBI:18420"/>
    </cofactor>
    <text evidence="1">Binds 2 magnesium ions per tetramer.</text>
</comment>
<comment type="subunit">
    <text evidence="1">Tetramer of two alpha and two beta subunits.</text>
</comment>
<comment type="subcellular location">
    <subcellularLocation>
        <location evidence="1">Cytoplasm</location>
    </subcellularLocation>
</comment>
<comment type="similarity">
    <text evidence="1">Belongs to the phenylalanyl-tRNA synthetase beta subunit family. Type 1 subfamily.</text>
</comment>
<proteinExistence type="inferred from homology"/>
<accession>Q6KHC8</accession>
<organism>
    <name type="scientific">Mycoplasma mobile (strain ATCC 43663 / 163K / NCTC 11711)</name>
    <name type="common">Mesomycoplasma mobile</name>
    <dbReference type="NCBI Taxonomy" id="267748"/>
    <lineage>
        <taxon>Bacteria</taxon>
        <taxon>Bacillati</taxon>
        <taxon>Mycoplasmatota</taxon>
        <taxon>Mycoplasmoidales</taxon>
        <taxon>Metamycoplasmataceae</taxon>
        <taxon>Mesomycoplasma</taxon>
    </lineage>
</organism>